<protein>
    <recommendedName>
        <fullName evidence="1">SsrA-binding protein</fullName>
    </recommendedName>
    <alternativeName>
        <fullName evidence="1">Small protein B</fullName>
    </alternativeName>
</protein>
<evidence type="ECO:0000255" key="1">
    <source>
        <dbReference type="HAMAP-Rule" id="MF_00023"/>
    </source>
</evidence>
<name>SSRP_SALNS</name>
<proteinExistence type="inferred from homology"/>
<gene>
    <name evidence="1" type="primary">smpB</name>
    <name type="ordered locus">SNSL254_A2901</name>
</gene>
<dbReference type="EMBL" id="CP001113">
    <property type="protein sequence ID" value="ACF65487.1"/>
    <property type="molecule type" value="Genomic_DNA"/>
</dbReference>
<dbReference type="RefSeq" id="WP_001518569.1">
    <property type="nucleotide sequence ID" value="NZ_CCMR01000001.1"/>
</dbReference>
<dbReference type="SMR" id="B4T2C5"/>
<dbReference type="GeneID" id="66757102"/>
<dbReference type="KEGG" id="see:SNSL254_A2901"/>
<dbReference type="HOGENOM" id="CLU_108953_3_0_6"/>
<dbReference type="Proteomes" id="UP000008824">
    <property type="component" value="Chromosome"/>
</dbReference>
<dbReference type="GO" id="GO:0005829">
    <property type="term" value="C:cytosol"/>
    <property type="evidence" value="ECO:0007669"/>
    <property type="project" value="TreeGrafter"/>
</dbReference>
<dbReference type="GO" id="GO:0003723">
    <property type="term" value="F:RNA binding"/>
    <property type="evidence" value="ECO:0007669"/>
    <property type="project" value="UniProtKB-UniRule"/>
</dbReference>
<dbReference type="GO" id="GO:0070929">
    <property type="term" value="P:trans-translation"/>
    <property type="evidence" value="ECO:0007669"/>
    <property type="project" value="UniProtKB-UniRule"/>
</dbReference>
<dbReference type="CDD" id="cd09294">
    <property type="entry name" value="SmpB"/>
    <property type="match status" value="1"/>
</dbReference>
<dbReference type="FunFam" id="2.40.280.10:FF:000001">
    <property type="entry name" value="SsrA-binding protein"/>
    <property type="match status" value="1"/>
</dbReference>
<dbReference type="Gene3D" id="2.40.280.10">
    <property type="match status" value="1"/>
</dbReference>
<dbReference type="HAMAP" id="MF_00023">
    <property type="entry name" value="SmpB"/>
    <property type="match status" value="1"/>
</dbReference>
<dbReference type="InterPro" id="IPR023620">
    <property type="entry name" value="SmpB"/>
</dbReference>
<dbReference type="InterPro" id="IPR000037">
    <property type="entry name" value="SsrA-bd_prot"/>
</dbReference>
<dbReference type="InterPro" id="IPR020081">
    <property type="entry name" value="SsrA-bd_prot_CS"/>
</dbReference>
<dbReference type="NCBIfam" id="NF003843">
    <property type="entry name" value="PRK05422.1"/>
    <property type="match status" value="1"/>
</dbReference>
<dbReference type="NCBIfam" id="TIGR00086">
    <property type="entry name" value="smpB"/>
    <property type="match status" value="1"/>
</dbReference>
<dbReference type="PANTHER" id="PTHR30308:SF2">
    <property type="entry name" value="SSRA-BINDING PROTEIN"/>
    <property type="match status" value="1"/>
</dbReference>
<dbReference type="PANTHER" id="PTHR30308">
    <property type="entry name" value="TMRNA-BINDING COMPONENT OF TRANS-TRANSLATION TAGGING COMPLEX"/>
    <property type="match status" value="1"/>
</dbReference>
<dbReference type="Pfam" id="PF01668">
    <property type="entry name" value="SmpB"/>
    <property type="match status" value="1"/>
</dbReference>
<dbReference type="SUPFAM" id="SSF74982">
    <property type="entry name" value="Small protein B (SmpB)"/>
    <property type="match status" value="1"/>
</dbReference>
<dbReference type="PROSITE" id="PS01317">
    <property type="entry name" value="SSRP"/>
    <property type="match status" value="1"/>
</dbReference>
<reference key="1">
    <citation type="journal article" date="2011" name="J. Bacteriol.">
        <title>Comparative genomics of 28 Salmonella enterica isolates: evidence for CRISPR-mediated adaptive sublineage evolution.</title>
        <authorList>
            <person name="Fricke W.F."/>
            <person name="Mammel M.K."/>
            <person name="McDermott P.F."/>
            <person name="Tartera C."/>
            <person name="White D.G."/>
            <person name="Leclerc J.E."/>
            <person name="Ravel J."/>
            <person name="Cebula T.A."/>
        </authorList>
    </citation>
    <scope>NUCLEOTIDE SEQUENCE [LARGE SCALE GENOMIC DNA]</scope>
    <source>
        <strain>SL254</strain>
    </source>
</reference>
<keyword id="KW-0963">Cytoplasm</keyword>
<keyword id="KW-0694">RNA-binding</keyword>
<organism>
    <name type="scientific">Salmonella newport (strain SL254)</name>
    <dbReference type="NCBI Taxonomy" id="423368"/>
    <lineage>
        <taxon>Bacteria</taxon>
        <taxon>Pseudomonadati</taxon>
        <taxon>Pseudomonadota</taxon>
        <taxon>Gammaproteobacteria</taxon>
        <taxon>Enterobacterales</taxon>
        <taxon>Enterobacteriaceae</taxon>
        <taxon>Salmonella</taxon>
    </lineage>
</organism>
<sequence length="160" mass="18232">MTKKKAHKPGSATIALNKRARHEYFIEEEFEAGLALQGWEVKSLRAGKANIGDSYVILKDGEAWLFGANFTPMAVASTHVVCDPTRTRKLLLNQRELDSLYGRINREGYTVVALSLYWKNAWCKVKIGVAKGKKQHDKRSDLKEREWQLDKARIMKNAGR</sequence>
<feature type="chain" id="PRO_1000090183" description="SsrA-binding protein">
    <location>
        <begin position="1"/>
        <end position="160"/>
    </location>
</feature>
<comment type="function">
    <text evidence="1">Required for rescue of stalled ribosomes mediated by trans-translation. Binds to transfer-messenger RNA (tmRNA), required for stable association of tmRNA with ribosomes. tmRNA and SmpB together mimic tRNA shape, replacing the anticodon stem-loop with SmpB. tmRNA is encoded by the ssrA gene; the 2 termini fold to resemble tRNA(Ala) and it encodes a 'tag peptide', a short internal open reading frame. During trans-translation Ala-aminoacylated tmRNA acts like a tRNA, entering the A-site of stalled ribosomes, displacing the stalled mRNA. The ribosome then switches to translate the ORF on the tmRNA; the nascent peptide is terminated with the 'tag peptide' encoded by the tmRNA and targeted for degradation. The ribosome is freed to recommence translation, which seems to be the essential function of trans-translation.</text>
</comment>
<comment type="subcellular location">
    <subcellularLocation>
        <location evidence="1">Cytoplasm</location>
    </subcellularLocation>
    <text evidence="1">The tmRNA-SmpB complex associates with stalled 70S ribosomes.</text>
</comment>
<comment type="similarity">
    <text evidence="1">Belongs to the SmpB family.</text>
</comment>
<accession>B4T2C5</accession>